<comment type="function">
    <text evidence="1">Catalyzes the reversible phosphatidyl group transfer from one phosphatidylglycerol molecule to another to form cardiolipin (CL) (diphosphatidylglycerol) and glycerol.</text>
</comment>
<comment type="catalytic activity">
    <reaction evidence="1">
        <text>2 a 1,2-diacyl-sn-glycero-3-phospho-(1'-sn-glycerol) = a cardiolipin + glycerol</text>
        <dbReference type="Rhea" id="RHEA:31451"/>
        <dbReference type="ChEBI" id="CHEBI:17754"/>
        <dbReference type="ChEBI" id="CHEBI:62237"/>
        <dbReference type="ChEBI" id="CHEBI:64716"/>
    </reaction>
</comment>
<comment type="subcellular location">
    <subcellularLocation>
        <location evidence="1">Cell membrane</location>
        <topology evidence="1">Multi-pass membrane protein</topology>
    </subcellularLocation>
</comment>
<comment type="similarity">
    <text evidence="1">Belongs to the phospholipase D family. Cardiolipin synthase subfamily.</text>
</comment>
<accession>Q81I00</accession>
<name>CLS1_BACCR</name>
<organism>
    <name type="scientific">Bacillus cereus (strain ATCC 14579 / DSM 31 / CCUG 7414 / JCM 2152 / NBRC 15305 / NCIMB 9373 / NCTC 2599 / NRRL B-3711)</name>
    <dbReference type="NCBI Taxonomy" id="226900"/>
    <lineage>
        <taxon>Bacteria</taxon>
        <taxon>Bacillati</taxon>
        <taxon>Bacillota</taxon>
        <taxon>Bacilli</taxon>
        <taxon>Bacillales</taxon>
        <taxon>Bacillaceae</taxon>
        <taxon>Bacillus</taxon>
        <taxon>Bacillus cereus group</taxon>
    </lineage>
</organism>
<protein>
    <recommendedName>
        <fullName evidence="1">Cardiolipin synthase 1</fullName>
        <shortName evidence="1">CL synthase 1</shortName>
        <ecNumber evidence="1">2.7.8.-</ecNumber>
    </recommendedName>
</protein>
<gene>
    <name type="primary">cls1</name>
    <name type="ordered locus">BC_0626</name>
</gene>
<feature type="chain" id="PRO_0000201243" description="Cardiolipin synthase 1">
    <location>
        <begin position="1"/>
        <end position="509"/>
    </location>
</feature>
<feature type="transmembrane region" description="Helical" evidence="1">
    <location>
        <begin position="4"/>
        <end position="24"/>
    </location>
</feature>
<feature type="transmembrane region" description="Helical" evidence="1">
    <location>
        <begin position="30"/>
        <end position="50"/>
    </location>
</feature>
<feature type="transmembrane region" description="Helical" evidence="1">
    <location>
        <begin position="59"/>
        <end position="79"/>
    </location>
</feature>
<feature type="domain" description="PLD phosphodiesterase 1" evidence="1">
    <location>
        <begin position="238"/>
        <end position="265"/>
    </location>
</feature>
<feature type="domain" description="PLD phosphodiesterase 2" evidence="1">
    <location>
        <begin position="422"/>
        <end position="449"/>
    </location>
</feature>
<feature type="active site" evidence="1">
    <location>
        <position position="243"/>
    </location>
</feature>
<feature type="active site" evidence="1">
    <location>
        <position position="245"/>
    </location>
</feature>
<feature type="active site" evidence="1">
    <location>
        <position position="250"/>
    </location>
</feature>
<feature type="active site" evidence="1">
    <location>
        <position position="427"/>
    </location>
</feature>
<feature type="active site" evidence="1">
    <location>
        <position position="429"/>
    </location>
</feature>
<feature type="active site" evidence="1">
    <location>
        <position position="434"/>
    </location>
</feature>
<proteinExistence type="inferred from homology"/>
<sequence>MKKPIVQLLLIFTIVSIVLFLLNTSYISLYTFVGALWSITIVGISFVIFIENRSPQSTLAWFLVLALLPIIGVLLYAIFGRSRWRRKKHLHRSEEQRKLFREILEGRRLELLLTVPLNERSIHLTEVIQKFGGGPAADRTTTKLLTNGDQTFSEILRAIEQAKHHIHIQYYIYKSDEIGTKVRDALIQKAKDGVIVRFLYDGLGSNTLRRRFLQPMKEAGIEIVEFDPIFSAWLLETVNYRNHRKIVIVDGEIGFTGGLNVGDEYLGRSKKFPVWRDSHLKIEGKALYKLQAIFLEDWLYASSGLNTYSWDQFMNRQYFPGKEISNAEGAVQIVASGPSSDDKSIRNTLLAVMGSAKKSIWIATPYFIPDQETLTLLRLSAIAGIDVRILYPGKSDSIISDQASQSYFTPLLKAGASIYSYKDGFMHAKIVLVDDTIATIGTANMDVRSFELNYEIISVLYESKTVHDIKRDFEEDFKHSTEIKWNSFQKRSIKKRILESFMRLISPLL</sequence>
<dbReference type="EC" id="2.7.8.-" evidence="1"/>
<dbReference type="EMBL" id="AE016877">
    <property type="protein sequence ID" value="AAP07643.1"/>
    <property type="molecule type" value="Genomic_DNA"/>
</dbReference>
<dbReference type="RefSeq" id="NP_830442.1">
    <property type="nucleotide sequence ID" value="NC_004722.1"/>
</dbReference>
<dbReference type="RefSeq" id="WP_000743034.1">
    <property type="nucleotide sequence ID" value="NZ_CP138336.1"/>
</dbReference>
<dbReference type="SMR" id="Q81I00"/>
<dbReference type="STRING" id="226900.BC_0626"/>
<dbReference type="KEGG" id="bce:BC0626"/>
<dbReference type="PATRIC" id="fig|226900.8.peg.585"/>
<dbReference type="HOGENOM" id="CLU_038053_1_2_9"/>
<dbReference type="OrthoDB" id="9762009at2"/>
<dbReference type="Proteomes" id="UP000001417">
    <property type="component" value="Chromosome"/>
</dbReference>
<dbReference type="GO" id="GO:0005886">
    <property type="term" value="C:plasma membrane"/>
    <property type="evidence" value="ECO:0007669"/>
    <property type="project" value="UniProtKB-SubCell"/>
</dbReference>
<dbReference type="GO" id="GO:0008808">
    <property type="term" value="F:cardiolipin synthase activity"/>
    <property type="evidence" value="ECO:0007669"/>
    <property type="project" value="InterPro"/>
</dbReference>
<dbReference type="GO" id="GO:0032049">
    <property type="term" value="P:cardiolipin biosynthetic process"/>
    <property type="evidence" value="ECO:0007669"/>
    <property type="project" value="InterPro"/>
</dbReference>
<dbReference type="CDD" id="cd09110">
    <property type="entry name" value="PLDc_CLS_1"/>
    <property type="match status" value="1"/>
</dbReference>
<dbReference type="CDD" id="cd09112">
    <property type="entry name" value="PLDc_CLS_2"/>
    <property type="match status" value="1"/>
</dbReference>
<dbReference type="FunFam" id="3.30.870.10:FF:000014">
    <property type="entry name" value="Cardiolipin synthase"/>
    <property type="match status" value="1"/>
</dbReference>
<dbReference type="Gene3D" id="3.30.870.10">
    <property type="entry name" value="Endonuclease Chain A"/>
    <property type="match status" value="2"/>
</dbReference>
<dbReference type="HAMAP" id="MF_01916">
    <property type="entry name" value="Cardiolipin_synth_Cls"/>
    <property type="match status" value="1"/>
</dbReference>
<dbReference type="InterPro" id="IPR030874">
    <property type="entry name" value="Cardiolipin_synth_Firmi"/>
</dbReference>
<dbReference type="InterPro" id="IPR022924">
    <property type="entry name" value="Cardiolipin_synthase"/>
</dbReference>
<dbReference type="InterPro" id="IPR027379">
    <property type="entry name" value="CLS_N"/>
</dbReference>
<dbReference type="InterPro" id="IPR025202">
    <property type="entry name" value="PLD-like_dom"/>
</dbReference>
<dbReference type="InterPro" id="IPR001736">
    <property type="entry name" value="PLipase_D/transphosphatidylase"/>
</dbReference>
<dbReference type="NCBIfam" id="TIGR04265">
    <property type="entry name" value="bac_cardiolipin"/>
    <property type="match status" value="1"/>
</dbReference>
<dbReference type="NCBIfam" id="NF009107">
    <property type="entry name" value="PRK12452.1"/>
    <property type="match status" value="1"/>
</dbReference>
<dbReference type="PANTHER" id="PTHR21248">
    <property type="entry name" value="CARDIOLIPIN SYNTHASE"/>
    <property type="match status" value="1"/>
</dbReference>
<dbReference type="PANTHER" id="PTHR21248:SF20">
    <property type="entry name" value="CARDIOLIPIN SYNTHASE YWIE-RELATED"/>
    <property type="match status" value="1"/>
</dbReference>
<dbReference type="Pfam" id="PF13091">
    <property type="entry name" value="PLDc_2"/>
    <property type="match status" value="2"/>
</dbReference>
<dbReference type="Pfam" id="PF13396">
    <property type="entry name" value="PLDc_N"/>
    <property type="match status" value="1"/>
</dbReference>
<dbReference type="SMART" id="SM00155">
    <property type="entry name" value="PLDc"/>
    <property type="match status" value="2"/>
</dbReference>
<dbReference type="SUPFAM" id="SSF56024">
    <property type="entry name" value="Phospholipase D/nuclease"/>
    <property type="match status" value="2"/>
</dbReference>
<dbReference type="PROSITE" id="PS50035">
    <property type="entry name" value="PLD"/>
    <property type="match status" value="2"/>
</dbReference>
<keyword id="KW-1003">Cell membrane</keyword>
<keyword id="KW-0444">Lipid biosynthesis</keyword>
<keyword id="KW-0443">Lipid metabolism</keyword>
<keyword id="KW-0472">Membrane</keyword>
<keyword id="KW-0594">Phospholipid biosynthesis</keyword>
<keyword id="KW-1208">Phospholipid metabolism</keyword>
<keyword id="KW-1185">Reference proteome</keyword>
<keyword id="KW-0677">Repeat</keyword>
<keyword id="KW-0808">Transferase</keyword>
<keyword id="KW-0812">Transmembrane</keyword>
<keyword id="KW-1133">Transmembrane helix</keyword>
<evidence type="ECO:0000255" key="1">
    <source>
        <dbReference type="HAMAP-Rule" id="MF_01916"/>
    </source>
</evidence>
<reference key="1">
    <citation type="journal article" date="2003" name="Nature">
        <title>Genome sequence of Bacillus cereus and comparative analysis with Bacillus anthracis.</title>
        <authorList>
            <person name="Ivanova N."/>
            <person name="Sorokin A."/>
            <person name="Anderson I."/>
            <person name="Galleron N."/>
            <person name="Candelon B."/>
            <person name="Kapatral V."/>
            <person name="Bhattacharyya A."/>
            <person name="Reznik G."/>
            <person name="Mikhailova N."/>
            <person name="Lapidus A."/>
            <person name="Chu L."/>
            <person name="Mazur M."/>
            <person name="Goltsman E."/>
            <person name="Larsen N."/>
            <person name="D'Souza M."/>
            <person name="Walunas T."/>
            <person name="Grechkin Y."/>
            <person name="Pusch G."/>
            <person name="Haselkorn R."/>
            <person name="Fonstein M."/>
            <person name="Ehrlich S.D."/>
            <person name="Overbeek R."/>
            <person name="Kyrpides N.C."/>
        </authorList>
    </citation>
    <scope>NUCLEOTIDE SEQUENCE [LARGE SCALE GENOMIC DNA]</scope>
    <source>
        <strain>ATCC 14579 / DSM 31 / CCUG 7414 / JCM 2152 / NBRC 15305 / NCIMB 9373 / NCTC 2599 / NRRL B-3711</strain>
    </source>
</reference>